<gene>
    <name evidence="1" type="primary">lacC</name>
    <name type="ordered locus">SA1995</name>
</gene>
<evidence type="ECO:0000255" key="1">
    <source>
        <dbReference type="HAMAP-Rule" id="MF_01557"/>
    </source>
</evidence>
<protein>
    <recommendedName>
        <fullName evidence="1">Tagatose-6-phosphate kinase</fullName>
        <ecNumber evidence="1">2.7.1.144</ecNumber>
    </recommendedName>
    <alternativeName>
        <fullName evidence="1">Phosphotagatokinase</fullName>
    </alternativeName>
</protein>
<sequence>MILTLTLNPSVDISYPLTALKLDDVNRVQEVSKTAGGKGLNVTRVLAQVGEPVLASGFIGGELGQFIAKKLDHADIKHAFYNIKGETRNCIAILHEGQQTEILEQGPEIDNQEAAGFIKHFEQLLEKVEAVAISGSLPKGLNQDYYAQIIERCQNKGVPVILDCSGATLQTVLENPYKPTVIKPNISELYQLLNQPLDESLESLKQAVSQPLFEGIEWIIVSLGAQGAFAKHNHTFYRVNIPTINVLNPVGSGDSTVAGITSAILNHENDHDLLKKANTLGMLNAQEAQTGYVNLNNYDELFNQIEVLEV</sequence>
<feature type="chain" id="PRO_0000203922" description="Tagatose-6-phosphate kinase">
    <location>
        <begin position="1"/>
        <end position="310"/>
    </location>
</feature>
<proteinExistence type="inferred from homology"/>
<reference key="1">
    <citation type="journal article" date="2001" name="Lancet">
        <title>Whole genome sequencing of meticillin-resistant Staphylococcus aureus.</title>
        <authorList>
            <person name="Kuroda M."/>
            <person name="Ohta T."/>
            <person name="Uchiyama I."/>
            <person name="Baba T."/>
            <person name="Yuzawa H."/>
            <person name="Kobayashi I."/>
            <person name="Cui L."/>
            <person name="Oguchi A."/>
            <person name="Aoki K."/>
            <person name="Nagai Y."/>
            <person name="Lian J.-Q."/>
            <person name="Ito T."/>
            <person name="Kanamori M."/>
            <person name="Matsumaru H."/>
            <person name="Maruyama A."/>
            <person name="Murakami H."/>
            <person name="Hosoyama A."/>
            <person name="Mizutani-Ui Y."/>
            <person name="Takahashi N.K."/>
            <person name="Sawano T."/>
            <person name="Inoue R."/>
            <person name="Kaito C."/>
            <person name="Sekimizu K."/>
            <person name="Hirakawa H."/>
            <person name="Kuhara S."/>
            <person name="Goto S."/>
            <person name="Yabuzaki J."/>
            <person name="Kanehisa M."/>
            <person name="Yamashita A."/>
            <person name="Oshima K."/>
            <person name="Furuya K."/>
            <person name="Yoshino C."/>
            <person name="Shiba T."/>
            <person name="Hattori M."/>
            <person name="Ogasawara N."/>
            <person name="Hayashi H."/>
            <person name="Hiramatsu K."/>
        </authorList>
    </citation>
    <scope>NUCLEOTIDE SEQUENCE [LARGE SCALE GENOMIC DNA]</scope>
    <source>
        <strain>N315</strain>
    </source>
</reference>
<dbReference type="EC" id="2.7.1.144" evidence="1"/>
<dbReference type="EMBL" id="BA000018">
    <property type="protein sequence ID" value="BAB43285.1"/>
    <property type="molecule type" value="Genomic_DNA"/>
</dbReference>
<dbReference type="PIR" id="D90015">
    <property type="entry name" value="D90015"/>
</dbReference>
<dbReference type="RefSeq" id="WP_000604134.1">
    <property type="nucleotide sequence ID" value="NC_002745.2"/>
</dbReference>
<dbReference type="SMR" id="P65699"/>
<dbReference type="EnsemblBacteria" id="BAB43285">
    <property type="protein sequence ID" value="BAB43285"/>
    <property type="gene ID" value="BAB43285"/>
</dbReference>
<dbReference type="KEGG" id="sau:SA1995"/>
<dbReference type="HOGENOM" id="CLU_050013_5_0_9"/>
<dbReference type="UniPathway" id="UPA00704">
    <property type="reaction ID" value="UER00715"/>
</dbReference>
<dbReference type="GO" id="GO:0005829">
    <property type="term" value="C:cytosol"/>
    <property type="evidence" value="ECO:0007669"/>
    <property type="project" value="TreeGrafter"/>
</dbReference>
<dbReference type="GO" id="GO:0005524">
    <property type="term" value="F:ATP binding"/>
    <property type="evidence" value="ECO:0007669"/>
    <property type="project" value="UniProtKB-KW"/>
</dbReference>
<dbReference type="GO" id="GO:0008443">
    <property type="term" value="F:phosphofructokinase activity"/>
    <property type="evidence" value="ECO:0007669"/>
    <property type="project" value="TreeGrafter"/>
</dbReference>
<dbReference type="GO" id="GO:0009024">
    <property type="term" value="F:tagatose-6-phosphate kinase activity"/>
    <property type="evidence" value="ECO:0007669"/>
    <property type="project" value="UniProtKB-UniRule"/>
</dbReference>
<dbReference type="GO" id="GO:2001059">
    <property type="term" value="P:D-tagatose 6-phosphate catabolic process"/>
    <property type="evidence" value="ECO:0007669"/>
    <property type="project" value="UniProtKB-UniRule"/>
</dbReference>
<dbReference type="GO" id="GO:0019512">
    <property type="term" value="P:lactose catabolic process via tagatose-6-phosphate"/>
    <property type="evidence" value="ECO:0007669"/>
    <property type="project" value="InterPro"/>
</dbReference>
<dbReference type="CDD" id="cd01164">
    <property type="entry name" value="FruK_PfkB_like"/>
    <property type="match status" value="1"/>
</dbReference>
<dbReference type="FunFam" id="3.40.1190.20:FF:000001">
    <property type="entry name" value="Phosphofructokinase"/>
    <property type="match status" value="1"/>
</dbReference>
<dbReference type="Gene3D" id="3.40.1190.20">
    <property type="match status" value="1"/>
</dbReference>
<dbReference type="HAMAP" id="MF_01557">
    <property type="entry name" value="LacC"/>
    <property type="match status" value="1"/>
</dbReference>
<dbReference type="InterPro" id="IPR002173">
    <property type="entry name" value="Carboh/pur_kinase_PfkB_CS"/>
</dbReference>
<dbReference type="InterPro" id="IPR005926">
    <property type="entry name" value="LacC"/>
</dbReference>
<dbReference type="InterPro" id="IPR011611">
    <property type="entry name" value="PfkB_dom"/>
</dbReference>
<dbReference type="InterPro" id="IPR029056">
    <property type="entry name" value="Ribokinase-like"/>
</dbReference>
<dbReference type="InterPro" id="IPR017583">
    <property type="entry name" value="Tagatose/fructose_Pkinase"/>
</dbReference>
<dbReference type="NCBIfam" id="TIGR03168">
    <property type="entry name" value="1-PFK"/>
    <property type="match status" value="1"/>
</dbReference>
<dbReference type="NCBIfam" id="TIGR01231">
    <property type="entry name" value="lacC"/>
    <property type="match status" value="1"/>
</dbReference>
<dbReference type="NCBIfam" id="NF010033">
    <property type="entry name" value="PRK13508.1"/>
    <property type="match status" value="1"/>
</dbReference>
<dbReference type="PANTHER" id="PTHR46566:SF5">
    <property type="entry name" value="1-PHOSPHOFRUCTOKINASE"/>
    <property type="match status" value="1"/>
</dbReference>
<dbReference type="PANTHER" id="PTHR46566">
    <property type="entry name" value="1-PHOSPHOFRUCTOKINASE-RELATED"/>
    <property type="match status" value="1"/>
</dbReference>
<dbReference type="Pfam" id="PF00294">
    <property type="entry name" value="PfkB"/>
    <property type="match status" value="1"/>
</dbReference>
<dbReference type="PIRSF" id="PIRSF000535">
    <property type="entry name" value="1PFK/6PFK/LacC"/>
    <property type="match status" value="1"/>
</dbReference>
<dbReference type="SUPFAM" id="SSF53613">
    <property type="entry name" value="Ribokinase-like"/>
    <property type="match status" value="1"/>
</dbReference>
<dbReference type="PROSITE" id="PS00583">
    <property type="entry name" value="PFKB_KINASES_1"/>
    <property type="match status" value="1"/>
</dbReference>
<dbReference type="PROSITE" id="PS00584">
    <property type="entry name" value="PFKB_KINASES_2"/>
    <property type="match status" value="1"/>
</dbReference>
<name>LACC_STAAN</name>
<keyword id="KW-0067">ATP-binding</keyword>
<keyword id="KW-0418">Kinase</keyword>
<keyword id="KW-0423">Lactose metabolism</keyword>
<keyword id="KW-0547">Nucleotide-binding</keyword>
<keyword id="KW-0808">Transferase</keyword>
<comment type="catalytic activity">
    <reaction evidence="1">
        <text>D-tagatofuranose 6-phosphate + ATP = D-tagatofuranose 1,6-bisphosphate + ADP + H(+)</text>
        <dbReference type="Rhea" id="RHEA:12420"/>
        <dbReference type="ChEBI" id="CHEBI:15378"/>
        <dbReference type="ChEBI" id="CHEBI:30616"/>
        <dbReference type="ChEBI" id="CHEBI:58694"/>
        <dbReference type="ChEBI" id="CHEBI:58695"/>
        <dbReference type="ChEBI" id="CHEBI:456216"/>
        <dbReference type="EC" id="2.7.1.144"/>
    </reaction>
</comment>
<comment type="pathway">
    <text evidence="1">Carbohydrate metabolism; D-tagatose 6-phosphate degradation; D-glyceraldehyde 3-phosphate and glycerone phosphate from D-tagatose 6-phosphate: step 1/2.</text>
</comment>
<comment type="similarity">
    <text evidence="1">Belongs to the carbohydrate kinase PfkB family. LacC subfamily.</text>
</comment>
<organism>
    <name type="scientific">Staphylococcus aureus (strain N315)</name>
    <dbReference type="NCBI Taxonomy" id="158879"/>
    <lineage>
        <taxon>Bacteria</taxon>
        <taxon>Bacillati</taxon>
        <taxon>Bacillota</taxon>
        <taxon>Bacilli</taxon>
        <taxon>Bacillales</taxon>
        <taxon>Staphylococcaceae</taxon>
        <taxon>Staphylococcus</taxon>
    </lineage>
</organism>
<accession>P65699</accession>
<accession>Q99S76</accession>